<comment type="function">
    <text>D-galactose-specific lectin, binds the T-antigen structure Gal-beta1,3-GalNAc.</text>
</comment>
<comment type="subunit">
    <text>Formed of four alpha chains and four beta chains.</text>
</comment>
<comment type="similarity">
    <text evidence="1 2">Belongs to the jacalin lectin family.</text>
</comment>
<sequence length="133" mass="14758">GVTFDDGAYTGIREINFEYNSETAIGGLRVTYDLNGMPFVAEDHKSFITGFKPVKISLEFPSEYIVEVSGYVGKVEGYTVIRSLTFKTNKQTYGPYGVTNGTPFSLPIENGLIVGFKGSIGYWLDYFSIYLSL</sequence>
<keyword id="KW-0002">3D-structure</keyword>
<keyword id="KW-0903">Direct protein sequencing</keyword>
<keyword id="KW-0430">Lectin</keyword>
<organism>
    <name type="scientific">Maclura pomifera</name>
    <name type="common">Osage orange</name>
    <name type="synonym">Ioxylon pomiferum</name>
    <dbReference type="NCBI Taxonomy" id="3496"/>
    <lineage>
        <taxon>Eukaryota</taxon>
        <taxon>Viridiplantae</taxon>
        <taxon>Streptophyta</taxon>
        <taxon>Embryophyta</taxon>
        <taxon>Tracheophyta</taxon>
        <taxon>Spermatophyta</taxon>
        <taxon>Magnoliopsida</taxon>
        <taxon>eudicotyledons</taxon>
        <taxon>Gunneridae</taxon>
        <taxon>Pentapetalae</taxon>
        <taxon>rosids</taxon>
        <taxon>fabids</taxon>
        <taxon>Rosales</taxon>
        <taxon>Moraceae</taxon>
        <taxon>Chlorophoreae</taxon>
        <taxon>Maclura</taxon>
    </lineage>
</organism>
<proteinExistence type="evidence at protein level"/>
<evidence type="ECO:0000255" key="1">
    <source>
        <dbReference type="PROSITE-ProRule" id="PRU01088"/>
    </source>
</evidence>
<evidence type="ECO:0000305" key="2"/>
<evidence type="ECO:0007829" key="3">
    <source>
        <dbReference type="PDB" id="1JOT"/>
    </source>
</evidence>
<evidence type="ECO:0007829" key="4">
    <source>
        <dbReference type="PDB" id="3LLZ"/>
    </source>
</evidence>
<feature type="chain" id="PRO_0000072803" description="Agglutinin alpha chain">
    <location>
        <begin position="1"/>
        <end position="133"/>
    </location>
</feature>
<feature type="domain" description="Jacalin-type lectin" evidence="1">
    <location>
        <begin position="1"/>
        <end position="133"/>
    </location>
</feature>
<feature type="sequence variant" description="In minor forms.">
    <original>T</original>
    <variation>V</variation>
    <location>
        <position position="31"/>
    </location>
</feature>
<feature type="sequence variant" description="In minor forms.">
    <original>K</original>
    <variation>T</variation>
    <location>
        <position position="52"/>
    </location>
</feature>
<feature type="sequence variant" description="In minor forms.">
    <original>E</original>
    <variation>D</variation>
    <location>
        <position position="59"/>
    </location>
</feature>
<feature type="sequence variant" description="In minor forms.">
    <original>V</original>
    <variation>I</variation>
    <location>
        <position position="72"/>
    </location>
</feature>
<feature type="sequence variant" description="In minor forms.">
    <original>I</original>
    <variation>V</variation>
    <location>
        <position position="81"/>
    </location>
</feature>
<feature type="sequence variant" description="In minor forms.">
    <original>N</original>
    <variation>Q</variation>
    <location>
        <position position="110"/>
    </location>
</feature>
<feature type="sequence variant" description="In minor forms.">
    <original>L</original>
    <variation>G</variation>
    <location>
        <position position="112"/>
    </location>
</feature>
<feature type="sequence conflict" description="In Ref. 2; AA sequence." evidence="2" ref="2">
    <original>R</original>
    <variation>D</variation>
    <location>
        <position position="29"/>
    </location>
</feature>
<feature type="sequence conflict" description="In Ref. 2; AA sequence." evidence="2" ref="2">
    <original>YD</original>
    <variation>QN</variation>
    <location>
        <begin position="32"/>
        <end position="33"/>
    </location>
</feature>
<feature type="strand" evidence="4">
    <location>
        <begin position="2"/>
        <end position="5"/>
    </location>
</feature>
<feature type="strand" evidence="4">
    <location>
        <begin position="10"/>
        <end position="19"/>
    </location>
</feature>
<feature type="strand" evidence="3">
    <location>
        <begin position="21"/>
        <end position="23"/>
    </location>
</feature>
<feature type="strand" evidence="4">
    <location>
        <begin position="25"/>
        <end position="34"/>
    </location>
</feature>
<feature type="strand" evidence="4">
    <location>
        <begin position="37"/>
        <end position="40"/>
    </location>
</feature>
<feature type="strand" evidence="4">
    <location>
        <begin position="52"/>
        <end position="57"/>
    </location>
</feature>
<feature type="turn" evidence="4">
    <location>
        <begin position="60"/>
        <end position="62"/>
    </location>
</feature>
<feature type="strand" evidence="4">
    <location>
        <begin position="65"/>
        <end position="75"/>
    </location>
</feature>
<feature type="strand" evidence="4">
    <location>
        <begin position="78"/>
        <end position="90"/>
    </location>
</feature>
<feature type="strand" evidence="4">
    <location>
        <begin position="92"/>
        <end position="97"/>
    </location>
</feature>
<feature type="strand" evidence="4">
    <location>
        <begin position="101"/>
        <end position="107"/>
    </location>
</feature>
<feature type="strand" evidence="4">
    <location>
        <begin position="112"/>
        <end position="132"/>
    </location>
</feature>
<dbReference type="PIR" id="S03990">
    <property type="entry name" value="S03990"/>
</dbReference>
<dbReference type="PIR" id="S15825">
    <property type="entry name" value="S15825"/>
</dbReference>
<dbReference type="PDB" id="1JOT">
    <property type="method" value="X-ray"/>
    <property type="resolution" value="2.20 A"/>
    <property type="chains" value="A=1-133"/>
</dbReference>
<dbReference type="PDB" id="3LLY">
    <property type="method" value="X-ray"/>
    <property type="resolution" value="2.25 A"/>
    <property type="chains" value="A=1-133"/>
</dbReference>
<dbReference type="PDB" id="3LLZ">
    <property type="method" value="X-ray"/>
    <property type="resolution" value="1.55 A"/>
    <property type="chains" value="A=1-133"/>
</dbReference>
<dbReference type="PDB" id="3LM1">
    <property type="method" value="X-ray"/>
    <property type="resolution" value="2.10 A"/>
    <property type="chains" value="A/C/E/G/I/K/M/O=1-133"/>
</dbReference>
<dbReference type="PDBsum" id="1JOT"/>
<dbReference type="PDBsum" id="3LLY"/>
<dbReference type="PDBsum" id="3LLZ"/>
<dbReference type="PDBsum" id="3LM1"/>
<dbReference type="SMR" id="P18674"/>
<dbReference type="EvolutionaryTrace" id="P18674"/>
<dbReference type="GO" id="GO:0030246">
    <property type="term" value="F:carbohydrate binding"/>
    <property type="evidence" value="ECO:0007669"/>
    <property type="project" value="UniProtKB-KW"/>
</dbReference>
<dbReference type="CDD" id="cd09612">
    <property type="entry name" value="Jacalin"/>
    <property type="match status" value="1"/>
</dbReference>
<dbReference type="Gene3D" id="2.100.10.30">
    <property type="entry name" value="Jacalin-like lectin domain"/>
    <property type="match status" value="1"/>
</dbReference>
<dbReference type="InterPro" id="IPR001229">
    <property type="entry name" value="Jacalin-like_lectin_dom"/>
</dbReference>
<dbReference type="InterPro" id="IPR033734">
    <property type="entry name" value="Jacalin-like_lectin_dom_plant"/>
</dbReference>
<dbReference type="InterPro" id="IPR036404">
    <property type="entry name" value="Jacalin-like_lectin_dom_sf"/>
</dbReference>
<dbReference type="PANTHER" id="PTHR47293:SF15">
    <property type="entry name" value="JACALIN-RELATED LECTIN 19"/>
    <property type="match status" value="1"/>
</dbReference>
<dbReference type="PANTHER" id="PTHR47293">
    <property type="entry name" value="JACALIN-RELATED LECTIN 3"/>
    <property type="match status" value="1"/>
</dbReference>
<dbReference type="Pfam" id="PF01419">
    <property type="entry name" value="Jacalin"/>
    <property type="match status" value="1"/>
</dbReference>
<dbReference type="SMART" id="SM00915">
    <property type="entry name" value="Jacalin"/>
    <property type="match status" value="1"/>
</dbReference>
<dbReference type="SUPFAM" id="SSF51101">
    <property type="entry name" value="Mannose-binding lectins"/>
    <property type="match status" value="1"/>
</dbReference>
<dbReference type="PROSITE" id="PS51752">
    <property type="entry name" value="JACALIN_LECTIN"/>
    <property type="match status" value="1"/>
</dbReference>
<protein>
    <recommendedName>
        <fullName>Agglutinin alpha chain</fullName>
    </recommendedName>
    <alternativeName>
        <fullName>MPA</fullName>
    </alternativeName>
</protein>
<reference key="1">
    <citation type="journal article" date="1991" name="FEBS Lett.">
        <title>The amino acid sequences of jacalin and the Maclura pomifera agglutinin.</title>
        <authorList>
            <person name="Young N.M."/>
            <person name="Johnston R.A.Z."/>
            <person name="Watson D.C."/>
        </authorList>
    </citation>
    <scope>PROTEIN SEQUENCE</scope>
    <source>
        <tissue>Seed</tissue>
    </source>
</reference>
<reference key="2">
    <citation type="journal article" date="1989" name="Arch. Biochem. Biophys.">
        <title>Homology of the D-galactose-specific lectins from Artocarpus integrifolia and Maclura pomifera and the role of an unusual small polypeptide subunit.</title>
        <authorList>
            <person name="Young N.M."/>
            <person name="Johnston R.A.Z."/>
            <person name="Szabo A.G."/>
            <person name="Watson D.C."/>
        </authorList>
    </citation>
    <scope>PROTEIN SEQUENCE OF 1-33</scope>
    <source>
        <tissue>Seed</tissue>
    </source>
</reference>
<reference key="3">
    <citation type="journal article" date="1998" name="J. Biol. Chem.">
        <title>Structure of the complex of Maclura pomifera agglutinin and the T-antigen disaccharide, Galbeta1,3GalNAc.</title>
        <authorList>
            <person name="Lee X."/>
            <person name="Thompson A."/>
            <person name="Zhang Z."/>
            <person name="Ton-That H."/>
            <person name="Biesterfeldt J."/>
            <person name="Ogata C."/>
            <person name="Xu L."/>
            <person name="Johnston R.A."/>
            <person name="Young N.M."/>
        </authorList>
    </citation>
    <scope>X-RAY CRYSTALLOGRAPHY (2.2 ANGSTROMS)</scope>
</reference>
<name>LECA_MACPO</name>
<accession>P18674</accession>